<sequence>MQAATVVINRRALRHNLQRLRELAPASKMVAVVKANAYGHGLLETARTLPDADAFGVARLEEALRLRAGGITKPVLLLEGFFDARDLPTISAQHFHTAVHNEEQLAALEEASLDEPVTVWMKLDTGMHRLGVRPEQAEAFYHRLTQCKNVRQPVNIVSHFARADEPKCGATEKQLAIFNTFCEGKPGQRSIAASGGILLWPQSHFDWVRPGIILYGVSPLEDRSIGADFGCQPVMSLTSSLIAVREHKAGEPVGYGGTWVSERDTRLGVVAMGYGDGYPRAAPSGTPVLVNGREVPIVGRVAMDMICVDLGPQAQDKAGDPVILWGEGLPVERIAEMTKVSAYELITRLTSRVAMKYVD</sequence>
<comment type="function">
    <text>Catalyzes the interconversion of L-alanine and D-alanine.</text>
</comment>
<comment type="catalytic activity">
    <reaction>
        <text>L-alanine = D-alanine</text>
        <dbReference type="Rhea" id="RHEA:20249"/>
        <dbReference type="ChEBI" id="CHEBI:57416"/>
        <dbReference type="ChEBI" id="CHEBI:57972"/>
        <dbReference type="EC" id="5.1.1.1"/>
    </reaction>
</comment>
<comment type="cofactor">
    <cofactor>
        <name>pyridoxal 5'-phosphate</name>
        <dbReference type="ChEBI" id="CHEBI:597326"/>
    </cofactor>
</comment>
<comment type="biophysicochemical properties">
    <phDependence>
        <text>Optimum pH is 8-10.</text>
    </phDependence>
    <temperatureDependence>
        <text>Optimum temperature is 50 degrees Celsius.</text>
    </temperatureDependence>
</comment>
<comment type="pathway">
    <text>Amino-acid biosynthesis; D-alanine biosynthesis; D-alanine from L-alanine: step 1/1.</text>
</comment>
<comment type="pathway">
    <text>Cell wall biogenesis; peptidoglycan biosynthesis.</text>
</comment>
<comment type="subunit">
    <text>Monomer but homodimer in the presence of the substrate.</text>
</comment>
<comment type="similarity">
    <text evidence="2">Belongs to the alanine racemase family.</text>
</comment>
<feature type="chain" id="PRO_0000114566" description="Alanine racemase, biosynthetic">
    <location>
        <begin position="1"/>
        <end position="359"/>
    </location>
</feature>
<feature type="active site" description="Proton acceptor; specific for D-alanine" evidence="1">
    <location>
        <position position="34"/>
    </location>
</feature>
<feature type="active site" description="Proton acceptor; specific for L-alanine" evidence="1">
    <location>
        <position position="255"/>
    </location>
</feature>
<feature type="binding site" evidence="1">
    <location>
        <position position="129"/>
    </location>
    <ligand>
        <name>substrate</name>
    </ligand>
</feature>
<feature type="binding site" evidence="1">
    <location>
        <position position="303"/>
    </location>
    <ligand>
        <name>substrate</name>
    </ligand>
</feature>
<feature type="modified residue" description="N6-(pyridoxal phosphate)lysine" evidence="1">
    <location>
        <position position="34"/>
    </location>
</feature>
<name>ALR1_SHISO</name>
<accession>Q93HP9</accession>
<organism>
    <name type="scientific">Shigella sonnei</name>
    <dbReference type="NCBI Taxonomy" id="624"/>
    <lineage>
        <taxon>Bacteria</taxon>
        <taxon>Pseudomonadati</taxon>
        <taxon>Pseudomonadota</taxon>
        <taxon>Gammaproteobacteria</taxon>
        <taxon>Enterobacterales</taxon>
        <taxon>Enterobacteriaceae</taxon>
        <taxon>Shigella</taxon>
    </lineage>
</organism>
<evidence type="ECO:0000250" key="1"/>
<evidence type="ECO:0000305" key="2"/>
<reference key="1">
    <citation type="journal article" date="2001" name="Biochem. Biophys. Res. Commun.">
        <title>Gene cloning and characterization of alanine racemases from Shigella dysenteriae, Shigella boydii, Shigella flexneri, and Shigella sonnei.</title>
        <authorList>
            <person name="Yokoigawa K."/>
            <person name="Hirasawa R."/>
            <person name="Ueno H."/>
            <person name="Okubo Y."/>
            <person name="Umesako S."/>
            <person name="Soda K."/>
        </authorList>
    </citation>
    <scope>NUCLEOTIDE SEQUENCE [GENOMIC DNA]</scope>
    <scope>PROTEIN SEQUENCE OF 1-21</scope>
</reference>
<keyword id="KW-0133">Cell shape</keyword>
<keyword id="KW-0961">Cell wall biogenesis/degradation</keyword>
<keyword id="KW-0903">Direct protein sequencing</keyword>
<keyword id="KW-0413">Isomerase</keyword>
<keyword id="KW-0573">Peptidoglycan synthesis</keyword>
<keyword id="KW-0663">Pyridoxal phosphate</keyword>
<proteinExistence type="evidence at protein level"/>
<gene>
    <name type="primary">alr</name>
</gene>
<dbReference type="EC" id="5.1.1.1"/>
<dbReference type="EMBL" id="AB070928">
    <property type="protein sequence ID" value="BAB71773.1"/>
    <property type="molecule type" value="Genomic_DNA"/>
</dbReference>
<dbReference type="RefSeq" id="WP_001147324.1">
    <property type="nucleotide sequence ID" value="NZ_WHSK01000051.1"/>
</dbReference>
<dbReference type="SMR" id="Q93HP9"/>
<dbReference type="STRING" id="216599.GCA_000283715_04772"/>
<dbReference type="GeneID" id="93777779"/>
<dbReference type="OMA" id="WEILCGF"/>
<dbReference type="BRENDA" id="5.1.1.1">
    <property type="organism ID" value="5713"/>
</dbReference>
<dbReference type="UniPathway" id="UPA00042">
    <property type="reaction ID" value="UER00497"/>
</dbReference>
<dbReference type="UniPathway" id="UPA00219"/>
<dbReference type="GO" id="GO:0005829">
    <property type="term" value="C:cytosol"/>
    <property type="evidence" value="ECO:0007669"/>
    <property type="project" value="TreeGrafter"/>
</dbReference>
<dbReference type="GO" id="GO:0008784">
    <property type="term" value="F:alanine racemase activity"/>
    <property type="evidence" value="ECO:0007669"/>
    <property type="project" value="UniProtKB-UniRule"/>
</dbReference>
<dbReference type="GO" id="GO:0030170">
    <property type="term" value="F:pyridoxal phosphate binding"/>
    <property type="evidence" value="ECO:0007669"/>
    <property type="project" value="UniProtKB-UniRule"/>
</dbReference>
<dbReference type="GO" id="GO:0071555">
    <property type="term" value="P:cell wall organization"/>
    <property type="evidence" value="ECO:0007669"/>
    <property type="project" value="UniProtKB-KW"/>
</dbReference>
<dbReference type="GO" id="GO:0030632">
    <property type="term" value="P:D-alanine biosynthetic process"/>
    <property type="evidence" value="ECO:0007669"/>
    <property type="project" value="UniProtKB-UniRule"/>
</dbReference>
<dbReference type="GO" id="GO:0009252">
    <property type="term" value="P:peptidoglycan biosynthetic process"/>
    <property type="evidence" value="ECO:0007669"/>
    <property type="project" value="UniProtKB-UniPathway"/>
</dbReference>
<dbReference type="GO" id="GO:0008360">
    <property type="term" value="P:regulation of cell shape"/>
    <property type="evidence" value="ECO:0007669"/>
    <property type="project" value="UniProtKB-KW"/>
</dbReference>
<dbReference type="CDD" id="cd06827">
    <property type="entry name" value="PLPDE_III_AR_proteobact"/>
    <property type="match status" value="1"/>
</dbReference>
<dbReference type="FunFam" id="2.40.37.10:FF:000002">
    <property type="entry name" value="Alanine racemase"/>
    <property type="match status" value="1"/>
</dbReference>
<dbReference type="FunFam" id="3.20.20.10:FF:000002">
    <property type="entry name" value="Alanine racemase"/>
    <property type="match status" value="1"/>
</dbReference>
<dbReference type="Gene3D" id="3.20.20.10">
    <property type="entry name" value="Alanine racemase"/>
    <property type="match status" value="1"/>
</dbReference>
<dbReference type="Gene3D" id="2.40.37.10">
    <property type="entry name" value="Lyase, Ornithine Decarboxylase, Chain A, domain 1"/>
    <property type="match status" value="1"/>
</dbReference>
<dbReference type="HAMAP" id="MF_01201">
    <property type="entry name" value="Ala_racemase"/>
    <property type="match status" value="1"/>
</dbReference>
<dbReference type="InterPro" id="IPR000821">
    <property type="entry name" value="Ala_racemase"/>
</dbReference>
<dbReference type="InterPro" id="IPR009006">
    <property type="entry name" value="Ala_racemase/Decarboxylase_C"/>
</dbReference>
<dbReference type="InterPro" id="IPR011079">
    <property type="entry name" value="Ala_racemase_C"/>
</dbReference>
<dbReference type="InterPro" id="IPR001608">
    <property type="entry name" value="Ala_racemase_N"/>
</dbReference>
<dbReference type="InterPro" id="IPR020622">
    <property type="entry name" value="Ala_racemase_pyridoxalP-BS"/>
</dbReference>
<dbReference type="InterPro" id="IPR029066">
    <property type="entry name" value="PLP-binding_barrel"/>
</dbReference>
<dbReference type="NCBIfam" id="TIGR00492">
    <property type="entry name" value="alr"/>
    <property type="match status" value="1"/>
</dbReference>
<dbReference type="PANTHER" id="PTHR30511">
    <property type="entry name" value="ALANINE RACEMASE"/>
    <property type="match status" value="1"/>
</dbReference>
<dbReference type="PANTHER" id="PTHR30511:SF4">
    <property type="entry name" value="ALANINE RACEMASE, BIOSYNTHETIC"/>
    <property type="match status" value="1"/>
</dbReference>
<dbReference type="Pfam" id="PF00842">
    <property type="entry name" value="Ala_racemase_C"/>
    <property type="match status" value="1"/>
</dbReference>
<dbReference type="Pfam" id="PF01168">
    <property type="entry name" value="Ala_racemase_N"/>
    <property type="match status" value="1"/>
</dbReference>
<dbReference type="PRINTS" id="PR00992">
    <property type="entry name" value="ALARACEMASE"/>
</dbReference>
<dbReference type="SMART" id="SM01005">
    <property type="entry name" value="Ala_racemase_C"/>
    <property type="match status" value="1"/>
</dbReference>
<dbReference type="SUPFAM" id="SSF50621">
    <property type="entry name" value="Alanine racemase C-terminal domain-like"/>
    <property type="match status" value="1"/>
</dbReference>
<dbReference type="SUPFAM" id="SSF51419">
    <property type="entry name" value="PLP-binding barrel"/>
    <property type="match status" value="1"/>
</dbReference>
<dbReference type="PROSITE" id="PS00395">
    <property type="entry name" value="ALANINE_RACEMASE"/>
    <property type="match status" value="1"/>
</dbReference>
<protein>
    <recommendedName>
        <fullName>Alanine racemase, biosynthetic</fullName>
        <ecNumber>5.1.1.1</ecNumber>
    </recommendedName>
</protein>